<gene>
    <name type="ordered locus">R01422</name>
    <name type="ORF">SMc01007</name>
</gene>
<name>YIDD_RHIME</name>
<evidence type="ECO:0000255" key="1">
    <source>
        <dbReference type="HAMAP-Rule" id="MF_00386"/>
    </source>
</evidence>
<evidence type="ECO:0000256" key="2">
    <source>
        <dbReference type="SAM" id="MobiDB-lite"/>
    </source>
</evidence>
<protein>
    <recommendedName>
        <fullName evidence="1">Putative membrane protein insertion efficiency factor</fullName>
    </recommendedName>
</protein>
<comment type="function">
    <text evidence="1">Could be involved in insertion of integral membrane proteins into the membrane.</text>
</comment>
<comment type="subcellular location">
    <subcellularLocation>
        <location evidence="1">Cell inner membrane</location>
        <topology evidence="1">Peripheral membrane protein</topology>
        <orientation evidence="1">Cytoplasmic side</orientation>
    </subcellularLocation>
</comment>
<comment type="similarity">
    <text evidence="1">Belongs to the UPF0161 family.</text>
</comment>
<organism>
    <name type="scientific">Rhizobium meliloti (strain 1021)</name>
    <name type="common">Ensifer meliloti</name>
    <name type="synonym">Sinorhizobium meliloti</name>
    <dbReference type="NCBI Taxonomy" id="266834"/>
    <lineage>
        <taxon>Bacteria</taxon>
        <taxon>Pseudomonadati</taxon>
        <taxon>Pseudomonadota</taxon>
        <taxon>Alphaproteobacteria</taxon>
        <taxon>Hyphomicrobiales</taxon>
        <taxon>Rhizobiaceae</taxon>
        <taxon>Sinorhizobium/Ensifer group</taxon>
        <taxon>Sinorhizobium</taxon>
    </lineage>
</organism>
<proteinExistence type="inferred from homology"/>
<feature type="chain" id="PRO_0000171860" description="Putative membrane protein insertion efficiency factor">
    <location>
        <begin position="1"/>
        <end position="124"/>
    </location>
</feature>
<feature type="region of interest" description="Disordered" evidence="2">
    <location>
        <begin position="1"/>
        <end position="26"/>
    </location>
</feature>
<feature type="compositionally biased region" description="Basic and acidic residues" evidence="2">
    <location>
        <begin position="1"/>
        <end position="12"/>
    </location>
</feature>
<reference key="1">
    <citation type="journal article" date="2001" name="Proc. Natl. Acad. Sci. U.S.A.">
        <title>Analysis of the chromosome sequence of the legume symbiont Sinorhizobium meliloti strain 1021.</title>
        <authorList>
            <person name="Capela D."/>
            <person name="Barloy-Hubler F."/>
            <person name="Gouzy J."/>
            <person name="Bothe G."/>
            <person name="Ampe F."/>
            <person name="Batut J."/>
            <person name="Boistard P."/>
            <person name="Becker A."/>
            <person name="Boutry M."/>
            <person name="Cadieu E."/>
            <person name="Dreano S."/>
            <person name="Gloux S."/>
            <person name="Godrie T."/>
            <person name="Goffeau A."/>
            <person name="Kahn D."/>
            <person name="Kiss E."/>
            <person name="Lelaure V."/>
            <person name="Masuy D."/>
            <person name="Pohl T."/>
            <person name="Portetelle D."/>
            <person name="Puehler A."/>
            <person name="Purnelle B."/>
            <person name="Ramsperger U."/>
            <person name="Renard C."/>
            <person name="Thebault P."/>
            <person name="Vandenbol M."/>
            <person name="Weidner S."/>
            <person name="Galibert F."/>
        </authorList>
    </citation>
    <scope>NUCLEOTIDE SEQUENCE [LARGE SCALE GENOMIC DNA]</scope>
    <source>
        <strain>1021</strain>
    </source>
</reference>
<reference key="2">
    <citation type="journal article" date="2001" name="Science">
        <title>The composite genome of the legume symbiont Sinorhizobium meliloti.</title>
        <authorList>
            <person name="Galibert F."/>
            <person name="Finan T.M."/>
            <person name="Long S.R."/>
            <person name="Puehler A."/>
            <person name="Abola P."/>
            <person name="Ampe F."/>
            <person name="Barloy-Hubler F."/>
            <person name="Barnett M.J."/>
            <person name="Becker A."/>
            <person name="Boistard P."/>
            <person name="Bothe G."/>
            <person name="Boutry M."/>
            <person name="Bowser L."/>
            <person name="Buhrmester J."/>
            <person name="Cadieu E."/>
            <person name="Capela D."/>
            <person name="Chain P."/>
            <person name="Cowie A."/>
            <person name="Davis R.W."/>
            <person name="Dreano S."/>
            <person name="Federspiel N.A."/>
            <person name="Fisher R.F."/>
            <person name="Gloux S."/>
            <person name="Godrie T."/>
            <person name="Goffeau A."/>
            <person name="Golding B."/>
            <person name="Gouzy J."/>
            <person name="Gurjal M."/>
            <person name="Hernandez-Lucas I."/>
            <person name="Hong A."/>
            <person name="Huizar L."/>
            <person name="Hyman R.W."/>
            <person name="Jones T."/>
            <person name="Kahn D."/>
            <person name="Kahn M.L."/>
            <person name="Kalman S."/>
            <person name="Keating D.H."/>
            <person name="Kiss E."/>
            <person name="Komp C."/>
            <person name="Lelaure V."/>
            <person name="Masuy D."/>
            <person name="Palm C."/>
            <person name="Peck M.C."/>
            <person name="Pohl T.M."/>
            <person name="Portetelle D."/>
            <person name="Purnelle B."/>
            <person name="Ramsperger U."/>
            <person name="Surzycki R."/>
            <person name="Thebault P."/>
            <person name="Vandenbol M."/>
            <person name="Vorhoelter F.J."/>
            <person name="Weidner S."/>
            <person name="Wells D.H."/>
            <person name="Wong K."/>
            <person name="Yeh K.-C."/>
            <person name="Batut J."/>
        </authorList>
    </citation>
    <scope>NUCLEOTIDE SEQUENCE [LARGE SCALE GENOMIC DNA]</scope>
    <source>
        <strain>1021</strain>
    </source>
</reference>
<dbReference type="EMBL" id="AL591688">
    <property type="protein sequence ID" value="CAC46001.1"/>
    <property type="molecule type" value="Genomic_DNA"/>
</dbReference>
<dbReference type="RefSeq" id="NP_385528.1">
    <property type="nucleotide sequence ID" value="NC_003047.1"/>
</dbReference>
<dbReference type="EnsemblBacteria" id="CAC46001">
    <property type="protein sequence ID" value="CAC46001"/>
    <property type="gene ID" value="SMc01007"/>
</dbReference>
<dbReference type="KEGG" id="sme:SMc01007"/>
<dbReference type="PATRIC" id="fig|266834.11.peg.2842"/>
<dbReference type="eggNOG" id="COG0759">
    <property type="taxonomic scope" value="Bacteria"/>
</dbReference>
<dbReference type="HOGENOM" id="CLU_144811_0_1_5"/>
<dbReference type="OrthoDB" id="9801753at2"/>
<dbReference type="Proteomes" id="UP000001976">
    <property type="component" value="Chromosome"/>
</dbReference>
<dbReference type="GO" id="GO:0005886">
    <property type="term" value="C:plasma membrane"/>
    <property type="evidence" value="ECO:0007669"/>
    <property type="project" value="UniProtKB-SubCell"/>
</dbReference>
<dbReference type="HAMAP" id="MF_00386">
    <property type="entry name" value="UPF0161_YidD"/>
    <property type="match status" value="1"/>
</dbReference>
<dbReference type="InterPro" id="IPR002696">
    <property type="entry name" value="Membr_insert_effic_factor_YidD"/>
</dbReference>
<dbReference type="NCBIfam" id="TIGR00278">
    <property type="entry name" value="membrane protein insertion efficiency factor YidD"/>
    <property type="match status" value="1"/>
</dbReference>
<dbReference type="PANTHER" id="PTHR33383">
    <property type="entry name" value="MEMBRANE PROTEIN INSERTION EFFICIENCY FACTOR-RELATED"/>
    <property type="match status" value="1"/>
</dbReference>
<dbReference type="PANTHER" id="PTHR33383:SF1">
    <property type="entry name" value="MEMBRANE PROTEIN INSERTION EFFICIENCY FACTOR-RELATED"/>
    <property type="match status" value="1"/>
</dbReference>
<dbReference type="Pfam" id="PF01809">
    <property type="entry name" value="YidD"/>
    <property type="match status" value="1"/>
</dbReference>
<dbReference type="SMART" id="SM01234">
    <property type="entry name" value="Haemolytic"/>
    <property type="match status" value="1"/>
</dbReference>
<accession>Q92QB2</accession>
<sequence>MCPQPHADHAITRGDTGAAGGRNWSGPFRKTPGRLVGMTLIRAYQLTLSSFIGNSCRHLPTCSEYGFEAIARYGLWAGGWLTLFRVVRCGPGGTHGFDPVPDSLAPRQRWYTPWRYWQPRRKDA</sequence>
<keyword id="KW-0997">Cell inner membrane</keyword>
<keyword id="KW-1003">Cell membrane</keyword>
<keyword id="KW-0472">Membrane</keyword>
<keyword id="KW-1185">Reference proteome</keyword>